<accession>Q57DG3</accession>
<organism>
    <name type="scientific">Brucella abortus biovar 1 (strain 9-941)</name>
    <dbReference type="NCBI Taxonomy" id="262698"/>
    <lineage>
        <taxon>Bacteria</taxon>
        <taxon>Pseudomonadati</taxon>
        <taxon>Pseudomonadota</taxon>
        <taxon>Alphaproteobacteria</taxon>
        <taxon>Hyphomicrobiales</taxon>
        <taxon>Brucellaceae</taxon>
        <taxon>Brucella/Ochrobactrum group</taxon>
        <taxon>Brucella</taxon>
    </lineage>
</organism>
<evidence type="ECO:0000255" key="1">
    <source>
        <dbReference type="HAMAP-Rule" id="MF_01225"/>
    </source>
</evidence>
<evidence type="ECO:0000255" key="2">
    <source>
        <dbReference type="PROSITE-ProRule" id="PRU01266"/>
    </source>
</evidence>
<feature type="chain" id="PRO_1000054176" description="GTP 3',8-cyclase">
    <location>
        <begin position="1"/>
        <end position="344"/>
    </location>
</feature>
<feature type="domain" description="Radical SAM core" evidence="2">
    <location>
        <begin position="19"/>
        <end position="245"/>
    </location>
</feature>
<feature type="binding site" evidence="1">
    <location>
        <position position="28"/>
    </location>
    <ligand>
        <name>GTP</name>
        <dbReference type="ChEBI" id="CHEBI:37565"/>
    </ligand>
</feature>
<feature type="binding site" evidence="1">
    <location>
        <position position="35"/>
    </location>
    <ligand>
        <name>[4Fe-4S] cluster</name>
        <dbReference type="ChEBI" id="CHEBI:49883"/>
        <label>1</label>
        <note>4Fe-4S-S-AdoMet</note>
    </ligand>
</feature>
<feature type="binding site" evidence="1">
    <location>
        <position position="39"/>
    </location>
    <ligand>
        <name>[4Fe-4S] cluster</name>
        <dbReference type="ChEBI" id="CHEBI:49883"/>
        <label>1</label>
        <note>4Fe-4S-S-AdoMet</note>
    </ligand>
</feature>
<feature type="binding site" evidence="1">
    <location>
        <position position="41"/>
    </location>
    <ligand>
        <name>S-adenosyl-L-methionine</name>
        <dbReference type="ChEBI" id="CHEBI:59789"/>
    </ligand>
</feature>
<feature type="binding site" evidence="1">
    <location>
        <position position="42"/>
    </location>
    <ligand>
        <name>[4Fe-4S] cluster</name>
        <dbReference type="ChEBI" id="CHEBI:49883"/>
        <label>1</label>
        <note>4Fe-4S-S-AdoMet</note>
    </ligand>
</feature>
<feature type="binding site" evidence="1">
    <location>
        <position position="77"/>
    </location>
    <ligand>
        <name>GTP</name>
        <dbReference type="ChEBI" id="CHEBI:37565"/>
    </ligand>
</feature>
<feature type="binding site" evidence="1">
    <location>
        <position position="81"/>
    </location>
    <ligand>
        <name>S-adenosyl-L-methionine</name>
        <dbReference type="ChEBI" id="CHEBI:59789"/>
    </ligand>
</feature>
<feature type="binding site" evidence="1">
    <location>
        <position position="111"/>
    </location>
    <ligand>
        <name>GTP</name>
        <dbReference type="ChEBI" id="CHEBI:37565"/>
    </ligand>
</feature>
<feature type="binding site" evidence="1">
    <location>
        <position position="135"/>
    </location>
    <ligand>
        <name>S-adenosyl-L-methionine</name>
        <dbReference type="ChEBI" id="CHEBI:59789"/>
    </ligand>
</feature>
<feature type="binding site" evidence="1">
    <location>
        <position position="171"/>
    </location>
    <ligand>
        <name>GTP</name>
        <dbReference type="ChEBI" id="CHEBI:37565"/>
    </ligand>
</feature>
<feature type="binding site" evidence="1">
    <location>
        <position position="205"/>
    </location>
    <ligand>
        <name>S-adenosyl-L-methionine</name>
        <dbReference type="ChEBI" id="CHEBI:59789"/>
    </ligand>
</feature>
<feature type="binding site" evidence="1">
    <location>
        <position position="268"/>
    </location>
    <ligand>
        <name>[4Fe-4S] cluster</name>
        <dbReference type="ChEBI" id="CHEBI:49883"/>
        <label>2</label>
        <note>4Fe-4S-substrate</note>
    </ligand>
</feature>
<feature type="binding site" evidence="1">
    <location>
        <position position="271"/>
    </location>
    <ligand>
        <name>[4Fe-4S] cluster</name>
        <dbReference type="ChEBI" id="CHEBI:49883"/>
        <label>2</label>
        <note>4Fe-4S-substrate</note>
    </ligand>
</feature>
<feature type="binding site" evidence="1">
    <location>
        <begin position="273"/>
        <end position="275"/>
    </location>
    <ligand>
        <name>GTP</name>
        <dbReference type="ChEBI" id="CHEBI:37565"/>
    </ligand>
</feature>
<feature type="binding site" evidence="1">
    <location>
        <position position="285"/>
    </location>
    <ligand>
        <name>[4Fe-4S] cluster</name>
        <dbReference type="ChEBI" id="CHEBI:49883"/>
        <label>2</label>
        <note>4Fe-4S-substrate</note>
    </ligand>
</feature>
<keyword id="KW-0004">4Fe-4S</keyword>
<keyword id="KW-0342">GTP-binding</keyword>
<keyword id="KW-0408">Iron</keyword>
<keyword id="KW-0411">Iron-sulfur</keyword>
<keyword id="KW-0456">Lyase</keyword>
<keyword id="KW-0479">Metal-binding</keyword>
<keyword id="KW-0501">Molybdenum cofactor biosynthesis</keyword>
<keyword id="KW-0547">Nucleotide-binding</keyword>
<keyword id="KW-0949">S-adenosyl-L-methionine</keyword>
<reference key="1">
    <citation type="journal article" date="2005" name="J. Bacteriol.">
        <title>Completion of the genome sequence of Brucella abortus and comparison to the highly similar genomes of Brucella melitensis and Brucella suis.</title>
        <authorList>
            <person name="Halling S.M."/>
            <person name="Peterson-Burch B.D."/>
            <person name="Bricker B.J."/>
            <person name="Zuerner R.L."/>
            <person name="Qing Z."/>
            <person name="Li L.-L."/>
            <person name="Kapur V."/>
            <person name="Alt D.P."/>
            <person name="Olsen S.C."/>
        </authorList>
    </citation>
    <scope>NUCLEOTIDE SEQUENCE [LARGE SCALE GENOMIC DNA]</scope>
    <source>
        <strain>9-941</strain>
    </source>
</reference>
<gene>
    <name evidence="1" type="primary">moaA</name>
    <name type="ordered locus">BruAb1_0964</name>
</gene>
<proteinExistence type="inferred from homology"/>
<name>MOAA_BRUAB</name>
<comment type="function">
    <text evidence="1">Catalyzes the cyclization of GTP to (8S)-3',8-cyclo-7,8-dihydroguanosine 5'-triphosphate.</text>
</comment>
<comment type="catalytic activity">
    <reaction evidence="1">
        <text>GTP + AH2 + S-adenosyl-L-methionine = (8S)-3',8-cyclo-7,8-dihydroguanosine 5'-triphosphate + 5'-deoxyadenosine + L-methionine + A + H(+)</text>
        <dbReference type="Rhea" id="RHEA:49576"/>
        <dbReference type="ChEBI" id="CHEBI:13193"/>
        <dbReference type="ChEBI" id="CHEBI:15378"/>
        <dbReference type="ChEBI" id="CHEBI:17319"/>
        <dbReference type="ChEBI" id="CHEBI:17499"/>
        <dbReference type="ChEBI" id="CHEBI:37565"/>
        <dbReference type="ChEBI" id="CHEBI:57844"/>
        <dbReference type="ChEBI" id="CHEBI:59789"/>
        <dbReference type="ChEBI" id="CHEBI:131766"/>
        <dbReference type="EC" id="4.1.99.22"/>
    </reaction>
</comment>
<comment type="cofactor">
    <cofactor evidence="1">
        <name>[4Fe-4S] cluster</name>
        <dbReference type="ChEBI" id="CHEBI:49883"/>
    </cofactor>
    <text evidence="1">Binds 2 [4Fe-4S] clusters. Binds 1 [4Fe-4S] cluster coordinated with 3 cysteines and an exchangeable S-adenosyl-L-methionine and 1 [4Fe-4S] cluster coordinated with 3 cysteines and the GTP-derived substrate.</text>
</comment>
<comment type="pathway">
    <text evidence="1">Cofactor biosynthesis; molybdopterin biosynthesis.</text>
</comment>
<comment type="subunit">
    <text evidence="1">Monomer and homodimer.</text>
</comment>
<comment type="similarity">
    <text evidence="1">Belongs to the radical SAM superfamily. MoaA family.</text>
</comment>
<dbReference type="EC" id="4.1.99.22" evidence="1"/>
<dbReference type="EMBL" id="AE017223">
    <property type="protein sequence ID" value="AAX74321.1"/>
    <property type="molecule type" value="Genomic_DNA"/>
</dbReference>
<dbReference type="RefSeq" id="WP_002966802.1">
    <property type="nucleotide sequence ID" value="NC_006932.1"/>
</dbReference>
<dbReference type="SMR" id="Q57DG3"/>
<dbReference type="EnsemblBacteria" id="AAX74321">
    <property type="protein sequence ID" value="AAX74321"/>
    <property type="gene ID" value="BruAb1_0964"/>
</dbReference>
<dbReference type="GeneID" id="93016679"/>
<dbReference type="KEGG" id="bmb:BruAb1_0964"/>
<dbReference type="HOGENOM" id="CLU_009273_0_1_5"/>
<dbReference type="UniPathway" id="UPA00344"/>
<dbReference type="Proteomes" id="UP000000540">
    <property type="component" value="Chromosome I"/>
</dbReference>
<dbReference type="GO" id="GO:0051539">
    <property type="term" value="F:4 iron, 4 sulfur cluster binding"/>
    <property type="evidence" value="ECO:0007669"/>
    <property type="project" value="UniProtKB-UniRule"/>
</dbReference>
<dbReference type="GO" id="GO:0061799">
    <property type="term" value="F:cyclic pyranopterin monophosphate synthase activity"/>
    <property type="evidence" value="ECO:0007669"/>
    <property type="project" value="TreeGrafter"/>
</dbReference>
<dbReference type="GO" id="GO:0061798">
    <property type="term" value="F:GTP 3',8'-cyclase activity"/>
    <property type="evidence" value="ECO:0007669"/>
    <property type="project" value="UniProtKB-UniRule"/>
</dbReference>
<dbReference type="GO" id="GO:0005525">
    <property type="term" value="F:GTP binding"/>
    <property type="evidence" value="ECO:0007669"/>
    <property type="project" value="UniProtKB-UniRule"/>
</dbReference>
<dbReference type="GO" id="GO:0046872">
    <property type="term" value="F:metal ion binding"/>
    <property type="evidence" value="ECO:0007669"/>
    <property type="project" value="UniProtKB-KW"/>
</dbReference>
<dbReference type="GO" id="GO:1904047">
    <property type="term" value="F:S-adenosyl-L-methionine binding"/>
    <property type="evidence" value="ECO:0007669"/>
    <property type="project" value="UniProtKB-UniRule"/>
</dbReference>
<dbReference type="GO" id="GO:0006777">
    <property type="term" value="P:Mo-molybdopterin cofactor biosynthetic process"/>
    <property type="evidence" value="ECO:0007669"/>
    <property type="project" value="UniProtKB-UniRule"/>
</dbReference>
<dbReference type="CDD" id="cd01335">
    <property type="entry name" value="Radical_SAM"/>
    <property type="match status" value="1"/>
</dbReference>
<dbReference type="CDD" id="cd21117">
    <property type="entry name" value="Twitch_MoaA"/>
    <property type="match status" value="1"/>
</dbReference>
<dbReference type="Gene3D" id="3.20.20.70">
    <property type="entry name" value="Aldolase class I"/>
    <property type="match status" value="1"/>
</dbReference>
<dbReference type="HAMAP" id="MF_01225_B">
    <property type="entry name" value="MoaA_B"/>
    <property type="match status" value="1"/>
</dbReference>
<dbReference type="InterPro" id="IPR013785">
    <property type="entry name" value="Aldolase_TIM"/>
</dbReference>
<dbReference type="InterPro" id="IPR006638">
    <property type="entry name" value="Elp3/MiaA/NifB-like_rSAM"/>
</dbReference>
<dbReference type="InterPro" id="IPR013483">
    <property type="entry name" value="MoaA"/>
</dbReference>
<dbReference type="InterPro" id="IPR000385">
    <property type="entry name" value="MoaA_NifB_PqqE_Fe-S-bd_CS"/>
</dbReference>
<dbReference type="InterPro" id="IPR010505">
    <property type="entry name" value="MoaA_twitch"/>
</dbReference>
<dbReference type="InterPro" id="IPR050105">
    <property type="entry name" value="MoCo_biosynth_MoaA/MoaC"/>
</dbReference>
<dbReference type="InterPro" id="IPR007197">
    <property type="entry name" value="rSAM"/>
</dbReference>
<dbReference type="NCBIfam" id="TIGR02666">
    <property type="entry name" value="moaA"/>
    <property type="match status" value="1"/>
</dbReference>
<dbReference type="PANTHER" id="PTHR22960:SF0">
    <property type="entry name" value="MOLYBDENUM COFACTOR BIOSYNTHESIS PROTEIN 1"/>
    <property type="match status" value="1"/>
</dbReference>
<dbReference type="PANTHER" id="PTHR22960">
    <property type="entry name" value="MOLYBDOPTERIN COFACTOR SYNTHESIS PROTEIN A"/>
    <property type="match status" value="1"/>
</dbReference>
<dbReference type="Pfam" id="PF13353">
    <property type="entry name" value="Fer4_12"/>
    <property type="match status" value="1"/>
</dbReference>
<dbReference type="Pfam" id="PF06463">
    <property type="entry name" value="Mob_synth_C"/>
    <property type="match status" value="1"/>
</dbReference>
<dbReference type="Pfam" id="PF04055">
    <property type="entry name" value="Radical_SAM"/>
    <property type="match status" value="1"/>
</dbReference>
<dbReference type="SFLD" id="SFLDG01383">
    <property type="entry name" value="cyclic_pyranopterin_phosphate"/>
    <property type="match status" value="1"/>
</dbReference>
<dbReference type="SFLD" id="SFLDG01216">
    <property type="entry name" value="thioether_bond_formation_requi"/>
    <property type="match status" value="1"/>
</dbReference>
<dbReference type="SMART" id="SM00729">
    <property type="entry name" value="Elp3"/>
    <property type="match status" value="1"/>
</dbReference>
<dbReference type="SUPFAM" id="SSF102114">
    <property type="entry name" value="Radical SAM enzymes"/>
    <property type="match status" value="1"/>
</dbReference>
<dbReference type="PROSITE" id="PS01305">
    <property type="entry name" value="MOAA_NIFB_PQQE"/>
    <property type="match status" value="1"/>
</dbReference>
<dbReference type="PROSITE" id="PS51918">
    <property type="entry name" value="RADICAL_SAM"/>
    <property type="match status" value="1"/>
</dbReference>
<sequence length="344" mass="38687">MRNVQDQPLVSPTEPMIDPFGRAVTYLRVSVTDRCDFRCTYCMAEHMTFLPKKDLLTLEELDRLCSVFIEKGVRKLRLTGGEPLVRKNIMHLIGNLSRHLKSGALDELTLTTNGSQLARFAGELADCGVRRINVSLDTLNPEKFRTITRWGDLSRVLEGIDAAQKAAIHVKINAVALKDFNDAEIPELIRWAHGRGMDVTLIETMPMGEIEFDRTDQYLPLSQVRADLASQFTLADIPYRTGGPARYVTISETGGRLGFITPMTYNFCESCNRVRLTCTGMLYMCLGQNDDADLRKALRESESDEHLSQAIDEAISRKPKGHDFIIDREHNRPSVARHMSLTGG</sequence>
<protein>
    <recommendedName>
        <fullName evidence="1">GTP 3',8-cyclase</fullName>
        <ecNumber evidence="1">4.1.99.22</ecNumber>
    </recommendedName>
    <alternativeName>
        <fullName evidence="1">Molybdenum cofactor biosynthesis protein A</fullName>
    </alternativeName>
</protein>